<protein>
    <recommendedName>
        <fullName>Basic phospholipase A2 KPA2</fullName>
        <shortName>svPLA2</shortName>
        <ecNumber>3.1.1.4</ecNumber>
    </recommendedName>
    <alternativeName>
        <fullName>Phosphatidylcholine 2-acylhydrolase</fullName>
    </alternativeName>
</protein>
<accession>Q9DF52</accession>
<proteinExistence type="evidence at protein level"/>
<dbReference type="EC" id="3.1.1.4"/>
<dbReference type="EMBL" id="AF297663">
    <property type="protein sequence ID" value="AAG13412.1"/>
    <property type="molecule type" value="mRNA"/>
</dbReference>
<dbReference type="PDB" id="1DPY">
    <property type="method" value="X-ray"/>
    <property type="resolution" value="2.45 A"/>
    <property type="chains" value="A=28-142"/>
</dbReference>
<dbReference type="PDB" id="1FE5">
    <property type="method" value="X-ray"/>
    <property type="resolution" value="2.45 A"/>
    <property type="chains" value="A=28-145"/>
</dbReference>
<dbReference type="PDB" id="1PO8">
    <property type="method" value="X-ray"/>
    <property type="resolution" value="2.71 A"/>
    <property type="chains" value="A=28-145"/>
</dbReference>
<dbReference type="PDBsum" id="1DPY"/>
<dbReference type="PDBsum" id="1FE5"/>
<dbReference type="PDBsum" id="1PO8"/>
<dbReference type="SMR" id="Q9DF52"/>
<dbReference type="EvolutionaryTrace" id="Q9DF52"/>
<dbReference type="GO" id="GO:0005576">
    <property type="term" value="C:extracellular region"/>
    <property type="evidence" value="ECO:0007669"/>
    <property type="project" value="UniProtKB-SubCell"/>
</dbReference>
<dbReference type="GO" id="GO:0005509">
    <property type="term" value="F:calcium ion binding"/>
    <property type="evidence" value="ECO:0007669"/>
    <property type="project" value="InterPro"/>
</dbReference>
<dbReference type="GO" id="GO:0047498">
    <property type="term" value="F:calcium-dependent phospholipase A2 activity"/>
    <property type="evidence" value="ECO:0007669"/>
    <property type="project" value="TreeGrafter"/>
</dbReference>
<dbReference type="GO" id="GO:0005543">
    <property type="term" value="F:phospholipid binding"/>
    <property type="evidence" value="ECO:0007669"/>
    <property type="project" value="TreeGrafter"/>
</dbReference>
<dbReference type="GO" id="GO:0090729">
    <property type="term" value="F:toxin activity"/>
    <property type="evidence" value="ECO:0007669"/>
    <property type="project" value="UniProtKB-KW"/>
</dbReference>
<dbReference type="GO" id="GO:0050482">
    <property type="term" value="P:arachidonate secretion"/>
    <property type="evidence" value="ECO:0007669"/>
    <property type="project" value="InterPro"/>
</dbReference>
<dbReference type="GO" id="GO:0016042">
    <property type="term" value="P:lipid catabolic process"/>
    <property type="evidence" value="ECO:0007669"/>
    <property type="project" value="UniProtKB-KW"/>
</dbReference>
<dbReference type="GO" id="GO:0006644">
    <property type="term" value="P:phospholipid metabolic process"/>
    <property type="evidence" value="ECO:0007669"/>
    <property type="project" value="InterPro"/>
</dbReference>
<dbReference type="CDD" id="cd00125">
    <property type="entry name" value="PLA2c"/>
    <property type="match status" value="1"/>
</dbReference>
<dbReference type="FunFam" id="1.20.90.10:FF:000007">
    <property type="entry name" value="Acidic phospholipase A2"/>
    <property type="match status" value="1"/>
</dbReference>
<dbReference type="Gene3D" id="1.20.90.10">
    <property type="entry name" value="Phospholipase A2 domain"/>
    <property type="match status" value="1"/>
</dbReference>
<dbReference type="InterPro" id="IPR001211">
    <property type="entry name" value="PLipase_A2"/>
</dbReference>
<dbReference type="InterPro" id="IPR033112">
    <property type="entry name" value="PLipase_A2_Asp_AS"/>
</dbReference>
<dbReference type="InterPro" id="IPR016090">
    <property type="entry name" value="PLipase_A2_dom"/>
</dbReference>
<dbReference type="InterPro" id="IPR036444">
    <property type="entry name" value="PLipase_A2_dom_sf"/>
</dbReference>
<dbReference type="InterPro" id="IPR033113">
    <property type="entry name" value="PLipase_A2_His_AS"/>
</dbReference>
<dbReference type="PANTHER" id="PTHR11716:SF94">
    <property type="entry name" value="PHOSPHOLIPASE A2"/>
    <property type="match status" value="1"/>
</dbReference>
<dbReference type="PANTHER" id="PTHR11716">
    <property type="entry name" value="PHOSPHOLIPASE A2 FAMILY MEMBER"/>
    <property type="match status" value="1"/>
</dbReference>
<dbReference type="Pfam" id="PF00068">
    <property type="entry name" value="Phospholip_A2_1"/>
    <property type="match status" value="1"/>
</dbReference>
<dbReference type="PRINTS" id="PR00389">
    <property type="entry name" value="PHPHLIPASEA2"/>
</dbReference>
<dbReference type="SMART" id="SM00085">
    <property type="entry name" value="PA2c"/>
    <property type="match status" value="1"/>
</dbReference>
<dbReference type="SUPFAM" id="SSF48619">
    <property type="entry name" value="Phospholipase A2, PLA2"/>
    <property type="match status" value="1"/>
</dbReference>
<dbReference type="PROSITE" id="PS00119">
    <property type="entry name" value="PA2_ASP"/>
    <property type="match status" value="1"/>
</dbReference>
<dbReference type="PROSITE" id="PS00118">
    <property type="entry name" value="PA2_HIS"/>
    <property type="match status" value="1"/>
</dbReference>
<keyword id="KW-0002">3D-structure</keyword>
<keyword id="KW-1203">Blood coagulation cascade inhibiting toxin</keyword>
<keyword id="KW-0106">Calcium</keyword>
<keyword id="KW-1015">Disulfide bond</keyword>
<keyword id="KW-1199">Hemostasis impairing toxin</keyword>
<keyword id="KW-0378">Hydrolase</keyword>
<keyword id="KW-0442">Lipid degradation</keyword>
<keyword id="KW-0443">Lipid metabolism</keyword>
<keyword id="KW-0479">Metal-binding</keyword>
<keyword id="KW-0528">Neurotoxin</keyword>
<keyword id="KW-0638">Presynaptic neurotoxin</keyword>
<keyword id="KW-0964">Secreted</keyword>
<keyword id="KW-0732">Signal</keyword>
<keyword id="KW-0800">Toxin</keyword>
<feature type="signal peptide" evidence="2">
    <location>
        <begin position="1"/>
        <end position="19"/>
    </location>
</feature>
<feature type="propeptide" id="PRO_0000022827" evidence="1">
    <location>
        <begin position="20"/>
        <end position="27"/>
    </location>
</feature>
<feature type="chain" id="PRO_0000022828" description="Basic phospholipase A2 KPA2">
    <location>
        <begin position="28"/>
        <end position="145"/>
    </location>
</feature>
<feature type="active site" evidence="7">
    <location>
        <position position="73"/>
    </location>
</feature>
<feature type="active site" evidence="7">
    <location>
        <position position="119"/>
    </location>
</feature>
<feature type="binding site" evidence="5 8">
    <location>
        <position position="53"/>
    </location>
    <ligand>
        <name>Ca(2+)</name>
        <dbReference type="ChEBI" id="CHEBI:29108"/>
    </ligand>
</feature>
<feature type="binding site" evidence="5 8">
    <location>
        <position position="55"/>
    </location>
    <ligand>
        <name>Ca(2+)</name>
        <dbReference type="ChEBI" id="CHEBI:29108"/>
    </ligand>
</feature>
<feature type="binding site" evidence="5 8">
    <location>
        <position position="57"/>
    </location>
    <ligand>
        <name>Ca(2+)</name>
        <dbReference type="ChEBI" id="CHEBI:29108"/>
    </ligand>
</feature>
<feature type="binding site" evidence="5 8">
    <location>
        <position position="74"/>
    </location>
    <ligand>
        <name>Ca(2+)</name>
        <dbReference type="ChEBI" id="CHEBI:29108"/>
    </ligand>
</feature>
<feature type="disulfide bond" evidence="5 8">
    <location>
        <begin position="38"/>
        <end position="97"/>
    </location>
</feature>
<feature type="disulfide bond" evidence="5 8">
    <location>
        <begin position="52"/>
        <end position="144"/>
    </location>
</feature>
<feature type="disulfide bond" evidence="5 8">
    <location>
        <begin position="54"/>
        <end position="70"/>
    </location>
</feature>
<feature type="disulfide bond" evidence="5 8">
    <location>
        <begin position="69"/>
        <end position="125"/>
    </location>
</feature>
<feature type="disulfide bond" evidence="5 8">
    <location>
        <begin position="76"/>
        <end position="118"/>
    </location>
</feature>
<feature type="disulfide bond" evidence="5 8">
    <location>
        <begin position="86"/>
        <end position="111"/>
    </location>
</feature>
<feature type="disulfide bond" evidence="5 8">
    <location>
        <begin position="104"/>
        <end position="116"/>
    </location>
</feature>
<feature type="helix" evidence="9">
    <location>
        <begin position="29"/>
        <end position="39"/>
    </location>
</feature>
<feature type="helix" evidence="9">
    <location>
        <begin position="44"/>
        <end position="47"/>
    </location>
</feature>
<feature type="turn" evidence="9">
    <location>
        <begin position="51"/>
        <end position="53"/>
    </location>
</feature>
<feature type="strand" evidence="9">
    <location>
        <begin position="54"/>
        <end position="57"/>
    </location>
</feature>
<feature type="helix" evidence="9">
    <location>
        <begin position="65"/>
        <end position="80"/>
    </location>
</feature>
<feature type="turn" evidence="9">
    <location>
        <begin position="88"/>
        <end position="90"/>
    </location>
</feature>
<feature type="strand" evidence="9">
    <location>
        <begin position="95"/>
        <end position="98"/>
    </location>
</feature>
<feature type="strand" evidence="9">
    <location>
        <begin position="101"/>
        <end position="104"/>
    </location>
</feature>
<feature type="helix" evidence="9">
    <location>
        <begin position="110"/>
        <end position="128"/>
    </location>
</feature>
<feature type="helix" evidence="9">
    <location>
        <begin position="133"/>
        <end position="135"/>
    </location>
</feature>
<feature type="turn" evidence="10">
    <location>
        <begin position="139"/>
        <end position="142"/>
    </location>
</feature>
<reference key="1">
    <citation type="journal article" date="2001" name="J. Mol. Biol.">
        <title>Sequence and crystal structure determination of a basic phospholipase A2 from common krait (Bungarus caeruleus) at 2.4 A resolution: identification and characterization of its pharmacological sites.</title>
        <authorList>
            <person name="Singh G."/>
            <person name="Gourinath S."/>
            <person name="Sharma S."/>
            <person name="Paramasivam M."/>
            <person name="Srinivasan A."/>
            <person name="Singh T.P."/>
        </authorList>
    </citation>
    <scope>NUCLEOTIDE SEQUENCE [MRNA]</scope>
    <scope>X-RAY CRYSTALLOGRAPHY (2.45 ANGSTROMS) OF 28-142 IN COMPLEX WITH CALCIUM ION</scope>
    <scope>COFACTOR</scope>
    <scope>SUBUNIT</scope>
    <scope>DISULFIDE BONDS</scope>
    <source>
        <tissue>Venom</tissue>
        <tissue>Venom gland</tissue>
    </source>
</reference>
<sequence length="145" mass="15765">MYPAHLLVLVAVCVSLLGAANIPPQPLNLIQFKNMIQCAGTRPWTAYVNYGCYCGKGGSGTPVDELDRCCYTHDNCYNEAEKIPGCNPNIKTYSYTCTEPNLTCTDTADTCARFLCDCDRTAAICFASAPYNSNNVMISSSTNCQ</sequence>
<comment type="function">
    <text>Snake venom phospholipase A2 (PLA2) that shows anticoagulant and neurotoxic activities. PLA2 catalyzes the calcium-dependent hydrolysis of the 2-acyl groups in 3-sn-phosphoglycerides.</text>
</comment>
<comment type="catalytic activity">
    <reaction evidence="3 4">
        <text>a 1,2-diacyl-sn-glycero-3-phosphocholine + H2O = a 1-acyl-sn-glycero-3-phosphocholine + a fatty acid + H(+)</text>
        <dbReference type="Rhea" id="RHEA:15801"/>
        <dbReference type="ChEBI" id="CHEBI:15377"/>
        <dbReference type="ChEBI" id="CHEBI:15378"/>
        <dbReference type="ChEBI" id="CHEBI:28868"/>
        <dbReference type="ChEBI" id="CHEBI:57643"/>
        <dbReference type="ChEBI" id="CHEBI:58168"/>
        <dbReference type="EC" id="3.1.1.4"/>
    </reaction>
</comment>
<comment type="cofactor">
    <cofactor evidence="7">
        <name>Ca(2+)</name>
        <dbReference type="ChEBI" id="CHEBI:29108"/>
    </cofactor>
    <text evidence="7">Binds 1 Ca(2+) ion.</text>
</comment>
<comment type="subunit">
    <text evidence="5">Monomer.</text>
</comment>
<comment type="subcellular location">
    <subcellularLocation>
        <location>Secreted</location>
    </subcellularLocation>
</comment>
<comment type="tissue specificity">
    <text>Expressed by the venom gland.</text>
</comment>
<comment type="similarity">
    <text evidence="6">Belongs to the phospholipase A2 family. Group I subfamily. D49 sub-subfamily.</text>
</comment>
<organism>
    <name type="scientific">Bungarus caeruleus</name>
    <name type="common">Indian krait</name>
    <dbReference type="NCBI Taxonomy" id="132961"/>
    <lineage>
        <taxon>Eukaryota</taxon>
        <taxon>Metazoa</taxon>
        <taxon>Chordata</taxon>
        <taxon>Craniata</taxon>
        <taxon>Vertebrata</taxon>
        <taxon>Euteleostomi</taxon>
        <taxon>Lepidosauria</taxon>
        <taxon>Squamata</taxon>
        <taxon>Bifurcata</taxon>
        <taxon>Unidentata</taxon>
        <taxon>Episquamata</taxon>
        <taxon>Toxicofera</taxon>
        <taxon>Serpentes</taxon>
        <taxon>Colubroidea</taxon>
        <taxon>Elapidae</taxon>
        <taxon>Bungarinae</taxon>
        <taxon>Bungarus</taxon>
    </lineage>
</organism>
<evidence type="ECO:0000250" key="1"/>
<evidence type="ECO:0000255" key="2"/>
<evidence type="ECO:0000255" key="3">
    <source>
        <dbReference type="PROSITE-ProRule" id="PRU10035"/>
    </source>
</evidence>
<evidence type="ECO:0000255" key="4">
    <source>
        <dbReference type="PROSITE-ProRule" id="PRU10036"/>
    </source>
</evidence>
<evidence type="ECO:0000269" key="5">
    <source>
    </source>
</evidence>
<evidence type="ECO:0000305" key="6"/>
<evidence type="ECO:0000305" key="7">
    <source>
    </source>
</evidence>
<evidence type="ECO:0007744" key="8">
    <source>
        <dbReference type="PDB" id="1FE5"/>
    </source>
</evidence>
<evidence type="ECO:0007829" key="9">
    <source>
        <dbReference type="PDB" id="1DPY"/>
    </source>
</evidence>
<evidence type="ECO:0007829" key="10">
    <source>
        <dbReference type="PDB" id="1PO8"/>
    </source>
</evidence>
<name>PA2B_BUNCE</name>